<dbReference type="EC" id="2.1.1.-" evidence="1"/>
<dbReference type="EMBL" id="CP000712">
    <property type="protein sequence ID" value="ABQ80813.1"/>
    <property type="molecule type" value="Genomic_DNA"/>
</dbReference>
<dbReference type="SMR" id="A5W9K3"/>
<dbReference type="KEGG" id="ppf:Pput_4693"/>
<dbReference type="eggNOG" id="COG2264">
    <property type="taxonomic scope" value="Bacteria"/>
</dbReference>
<dbReference type="HOGENOM" id="CLU_049382_4_1_6"/>
<dbReference type="GO" id="GO:0005829">
    <property type="term" value="C:cytosol"/>
    <property type="evidence" value="ECO:0007669"/>
    <property type="project" value="TreeGrafter"/>
</dbReference>
<dbReference type="GO" id="GO:0016279">
    <property type="term" value="F:protein-lysine N-methyltransferase activity"/>
    <property type="evidence" value="ECO:0007669"/>
    <property type="project" value="TreeGrafter"/>
</dbReference>
<dbReference type="GO" id="GO:0032259">
    <property type="term" value="P:methylation"/>
    <property type="evidence" value="ECO:0007669"/>
    <property type="project" value="UniProtKB-KW"/>
</dbReference>
<dbReference type="Gene3D" id="3.40.50.150">
    <property type="entry name" value="Vaccinia Virus protein VP39"/>
    <property type="match status" value="1"/>
</dbReference>
<dbReference type="HAMAP" id="MF_00735">
    <property type="entry name" value="Methyltr_PrmA"/>
    <property type="match status" value="1"/>
</dbReference>
<dbReference type="InterPro" id="IPR050078">
    <property type="entry name" value="Ribosomal_L11_MeTrfase_PrmA"/>
</dbReference>
<dbReference type="InterPro" id="IPR004498">
    <property type="entry name" value="Ribosomal_PrmA_MeTrfase"/>
</dbReference>
<dbReference type="InterPro" id="IPR029063">
    <property type="entry name" value="SAM-dependent_MTases_sf"/>
</dbReference>
<dbReference type="NCBIfam" id="TIGR00406">
    <property type="entry name" value="prmA"/>
    <property type="match status" value="1"/>
</dbReference>
<dbReference type="PANTHER" id="PTHR43648">
    <property type="entry name" value="ELECTRON TRANSFER FLAVOPROTEIN BETA SUBUNIT LYSINE METHYLTRANSFERASE"/>
    <property type="match status" value="1"/>
</dbReference>
<dbReference type="PANTHER" id="PTHR43648:SF1">
    <property type="entry name" value="ELECTRON TRANSFER FLAVOPROTEIN BETA SUBUNIT LYSINE METHYLTRANSFERASE"/>
    <property type="match status" value="1"/>
</dbReference>
<dbReference type="Pfam" id="PF06325">
    <property type="entry name" value="PrmA"/>
    <property type="match status" value="1"/>
</dbReference>
<dbReference type="PIRSF" id="PIRSF000401">
    <property type="entry name" value="RPL11_MTase"/>
    <property type="match status" value="1"/>
</dbReference>
<dbReference type="SUPFAM" id="SSF53335">
    <property type="entry name" value="S-adenosyl-L-methionine-dependent methyltransferases"/>
    <property type="match status" value="1"/>
</dbReference>
<organism>
    <name type="scientific">Pseudomonas putida (strain ATCC 700007 / DSM 6899 / JCM 31910 / BCRC 17059 / LMG 24140 / F1)</name>
    <dbReference type="NCBI Taxonomy" id="351746"/>
    <lineage>
        <taxon>Bacteria</taxon>
        <taxon>Pseudomonadati</taxon>
        <taxon>Pseudomonadota</taxon>
        <taxon>Gammaproteobacteria</taxon>
        <taxon>Pseudomonadales</taxon>
        <taxon>Pseudomonadaceae</taxon>
        <taxon>Pseudomonas</taxon>
    </lineage>
</organism>
<feature type="chain" id="PRO_1000046070" description="Ribosomal protein L11 methyltransferase">
    <location>
        <begin position="1"/>
        <end position="292"/>
    </location>
</feature>
<feature type="binding site" evidence="1">
    <location>
        <position position="144"/>
    </location>
    <ligand>
        <name>S-adenosyl-L-methionine</name>
        <dbReference type="ChEBI" id="CHEBI:59789"/>
    </ligand>
</feature>
<feature type="binding site" evidence="1">
    <location>
        <position position="165"/>
    </location>
    <ligand>
        <name>S-adenosyl-L-methionine</name>
        <dbReference type="ChEBI" id="CHEBI:59789"/>
    </ligand>
</feature>
<feature type="binding site" evidence="1">
    <location>
        <position position="187"/>
    </location>
    <ligand>
        <name>S-adenosyl-L-methionine</name>
        <dbReference type="ChEBI" id="CHEBI:59789"/>
    </ligand>
</feature>
<feature type="binding site" evidence="1">
    <location>
        <position position="229"/>
    </location>
    <ligand>
        <name>S-adenosyl-L-methionine</name>
        <dbReference type="ChEBI" id="CHEBI:59789"/>
    </ligand>
</feature>
<sequence>MPWLQVRLAISPEQAETYEDALLEVGAVSVTFMDAEDQPIFEPDLNTTPLWSHTHLLALFEADADPEQVFAHLRLLTGAELPEHQAEVIEDQDWERSWMDNFQPMRFGRRLWIVPSWHDAPEKDAVNLLLDPGLAFGTGTHPTTALCLEWLDGQQLEGTQVLDFGCGSGILAIAALLLGAREAVGTDIDVQAIEASRDNAQRNGIADEKLALYLPEHMPAMQADVLVANILAGPLVSLAPQLSGLVRPGGLLALSGILAEQGEDVAAAYAADFELDPIVVRDGWVRISGRRR</sequence>
<name>PRMA_PSEP1</name>
<protein>
    <recommendedName>
        <fullName evidence="1">Ribosomal protein L11 methyltransferase</fullName>
        <shortName evidence="1">L11 Mtase</shortName>
        <ecNumber evidence="1">2.1.1.-</ecNumber>
    </recommendedName>
</protein>
<accession>A5W9K3</accession>
<comment type="function">
    <text evidence="1">Methylates ribosomal protein L11.</text>
</comment>
<comment type="catalytic activity">
    <reaction evidence="1">
        <text>L-lysyl-[protein] + 3 S-adenosyl-L-methionine = N(6),N(6),N(6)-trimethyl-L-lysyl-[protein] + 3 S-adenosyl-L-homocysteine + 3 H(+)</text>
        <dbReference type="Rhea" id="RHEA:54192"/>
        <dbReference type="Rhea" id="RHEA-COMP:9752"/>
        <dbReference type="Rhea" id="RHEA-COMP:13826"/>
        <dbReference type="ChEBI" id="CHEBI:15378"/>
        <dbReference type="ChEBI" id="CHEBI:29969"/>
        <dbReference type="ChEBI" id="CHEBI:57856"/>
        <dbReference type="ChEBI" id="CHEBI:59789"/>
        <dbReference type="ChEBI" id="CHEBI:61961"/>
    </reaction>
</comment>
<comment type="subcellular location">
    <subcellularLocation>
        <location evidence="1">Cytoplasm</location>
    </subcellularLocation>
</comment>
<comment type="similarity">
    <text evidence="1">Belongs to the methyltransferase superfamily. PrmA family.</text>
</comment>
<proteinExistence type="inferred from homology"/>
<keyword id="KW-0963">Cytoplasm</keyword>
<keyword id="KW-0489">Methyltransferase</keyword>
<keyword id="KW-0949">S-adenosyl-L-methionine</keyword>
<keyword id="KW-0808">Transferase</keyword>
<evidence type="ECO:0000255" key="1">
    <source>
        <dbReference type="HAMAP-Rule" id="MF_00735"/>
    </source>
</evidence>
<reference key="1">
    <citation type="submission" date="2007-05" db="EMBL/GenBank/DDBJ databases">
        <title>Complete sequence of Pseudomonas putida F1.</title>
        <authorList>
            <consortium name="US DOE Joint Genome Institute"/>
            <person name="Copeland A."/>
            <person name="Lucas S."/>
            <person name="Lapidus A."/>
            <person name="Barry K."/>
            <person name="Detter J.C."/>
            <person name="Glavina del Rio T."/>
            <person name="Hammon N."/>
            <person name="Israni S."/>
            <person name="Dalin E."/>
            <person name="Tice H."/>
            <person name="Pitluck S."/>
            <person name="Chain P."/>
            <person name="Malfatti S."/>
            <person name="Shin M."/>
            <person name="Vergez L."/>
            <person name="Schmutz J."/>
            <person name="Larimer F."/>
            <person name="Land M."/>
            <person name="Hauser L."/>
            <person name="Kyrpides N."/>
            <person name="Lykidis A."/>
            <person name="Parales R."/>
            <person name="Richardson P."/>
        </authorList>
    </citation>
    <scope>NUCLEOTIDE SEQUENCE [LARGE SCALE GENOMIC DNA]</scope>
    <source>
        <strain>ATCC 700007 / DSM 6899 / JCM 31910 / BCRC 17059 / LMG 24140 / F1</strain>
    </source>
</reference>
<gene>
    <name evidence="1" type="primary">prmA</name>
    <name type="ordered locus">Pput_4693</name>
</gene>